<name>RL23_NAUPA</name>
<comment type="function">
    <text evidence="1">One of the early assembly proteins it binds 23S rRNA. One of the proteins that surrounds the polypeptide exit tunnel on the outside of the ribosome. Forms the main docking site for trigger factor binding to the ribosome.</text>
</comment>
<comment type="subunit">
    <text evidence="1">Part of the 50S ribosomal subunit. Contacts protein L29, and trigger factor when it is bound to the ribosome.</text>
</comment>
<comment type="similarity">
    <text evidence="1">Belongs to the universal ribosomal protein uL23 family.</text>
</comment>
<reference key="1">
    <citation type="journal article" date="2009" name="PLoS Genet.">
        <title>Adaptations to submarine hydrothermal environments exemplified by the genome of Nautilia profundicola.</title>
        <authorList>
            <person name="Campbell B.J."/>
            <person name="Smith J.L."/>
            <person name="Hanson T.E."/>
            <person name="Klotz M.G."/>
            <person name="Stein L.Y."/>
            <person name="Lee C.K."/>
            <person name="Wu D."/>
            <person name="Robinson J.M."/>
            <person name="Khouri H.M."/>
            <person name="Eisen J.A."/>
            <person name="Cary S.C."/>
        </authorList>
    </citation>
    <scope>NUCLEOTIDE SEQUENCE [LARGE SCALE GENOMIC DNA]</scope>
    <source>
        <strain>ATCC BAA-1463 / DSM 18972 / AmH</strain>
    </source>
</reference>
<organism>
    <name type="scientific">Nautilia profundicola (strain ATCC BAA-1463 / DSM 18972 / AmH)</name>
    <dbReference type="NCBI Taxonomy" id="598659"/>
    <lineage>
        <taxon>Bacteria</taxon>
        <taxon>Pseudomonadati</taxon>
        <taxon>Campylobacterota</taxon>
        <taxon>Epsilonproteobacteria</taxon>
        <taxon>Nautiliales</taxon>
        <taxon>Nautiliaceae</taxon>
        <taxon>Nautilia</taxon>
    </lineage>
</organism>
<feature type="chain" id="PRO_1000184098" description="Large ribosomal subunit protein uL23">
    <location>
        <begin position="1"/>
        <end position="93"/>
    </location>
</feature>
<evidence type="ECO:0000255" key="1">
    <source>
        <dbReference type="HAMAP-Rule" id="MF_01369"/>
    </source>
</evidence>
<evidence type="ECO:0000305" key="2"/>
<gene>
    <name evidence="1" type="primary">rplW</name>
    <name type="ordered locus">NAMH_1639</name>
</gene>
<proteinExistence type="inferred from homology"/>
<accession>B9L6N1</accession>
<protein>
    <recommendedName>
        <fullName evidence="1">Large ribosomal subunit protein uL23</fullName>
    </recommendedName>
    <alternativeName>
        <fullName evidence="2">50S ribosomal protein L23</fullName>
    </alternativeName>
</protein>
<sequence length="93" mass="10703">MADITDIKSIVYTEKALNLQEQGVLVVQTTPKVTKNQLKEIFKEYFGVTPLKVNSLRQKGKVKRFRGIEGKRPDYKKFYVKLPEDAKLESLSV</sequence>
<dbReference type="EMBL" id="CP001279">
    <property type="protein sequence ID" value="ACM92441.1"/>
    <property type="molecule type" value="Genomic_DNA"/>
</dbReference>
<dbReference type="RefSeq" id="WP_012663812.1">
    <property type="nucleotide sequence ID" value="NC_012115.1"/>
</dbReference>
<dbReference type="SMR" id="B9L6N1"/>
<dbReference type="STRING" id="598659.NAMH_1639"/>
<dbReference type="KEGG" id="nam:NAMH_1639"/>
<dbReference type="eggNOG" id="COG0089">
    <property type="taxonomic scope" value="Bacteria"/>
</dbReference>
<dbReference type="HOGENOM" id="CLU_037562_3_1_7"/>
<dbReference type="OrthoDB" id="5339807at2"/>
<dbReference type="Proteomes" id="UP000000448">
    <property type="component" value="Chromosome"/>
</dbReference>
<dbReference type="GO" id="GO:1990904">
    <property type="term" value="C:ribonucleoprotein complex"/>
    <property type="evidence" value="ECO:0007669"/>
    <property type="project" value="UniProtKB-KW"/>
</dbReference>
<dbReference type="GO" id="GO:0005840">
    <property type="term" value="C:ribosome"/>
    <property type="evidence" value="ECO:0007669"/>
    <property type="project" value="UniProtKB-KW"/>
</dbReference>
<dbReference type="GO" id="GO:0019843">
    <property type="term" value="F:rRNA binding"/>
    <property type="evidence" value="ECO:0007669"/>
    <property type="project" value="UniProtKB-UniRule"/>
</dbReference>
<dbReference type="GO" id="GO:0003735">
    <property type="term" value="F:structural constituent of ribosome"/>
    <property type="evidence" value="ECO:0007669"/>
    <property type="project" value="InterPro"/>
</dbReference>
<dbReference type="GO" id="GO:0006412">
    <property type="term" value="P:translation"/>
    <property type="evidence" value="ECO:0007669"/>
    <property type="project" value="UniProtKB-UniRule"/>
</dbReference>
<dbReference type="Gene3D" id="3.30.70.330">
    <property type="match status" value="1"/>
</dbReference>
<dbReference type="HAMAP" id="MF_01369_B">
    <property type="entry name" value="Ribosomal_uL23_B"/>
    <property type="match status" value="1"/>
</dbReference>
<dbReference type="InterPro" id="IPR012677">
    <property type="entry name" value="Nucleotide-bd_a/b_plait_sf"/>
</dbReference>
<dbReference type="InterPro" id="IPR013025">
    <property type="entry name" value="Ribosomal_uL23-like"/>
</dbReference>
<dbReference type="InterPro" id="IPR012678">
    <property type="entry name" value="Ribosomal_uL23/eL15/eS24_sf"/>
</dbReference>
<dbReference type="NCBIfam" id="NF004362">
    <property type="entry name" value="PRK05738.2-2"/>
    <property type="match status" value="1"/>
</dbReference>
<dbReference type="Pfam" id="PF00276">
    <property type="entry name" value="Ribosomal_L23"/>
    <property type="match status" value="1"/>
</dbReference>
<dbReference type="SUPFAM" id="SSF54189">
    <property type="entry name" value="Ribosomal proteins S24e, L23 and L15e"/>
    <property type="match status" value="1"/>
</dbReference>
<keyword id="KW-0687">Ribonucleoprotein</keyword>
<keyword id="KW-0689">Ribosomal protein</keyword>
<keyword id="KW-0694">RNA-binding</keyword>
<keyword id="KW-0699">rRNA-binding</keyword>